<accession>C7GRS7</accession>
<keyword id="KW-0472">Membrane</keyword>
<keyword id="KW-0812">Transmembrane</keyword>
<keyword id="KW-1133">Transmembrane helix</keyword>
<gene>
    <name type="primary">AIM11</name>
    <name type="synonym">GEP8</name>
    <name type="ORF">C1Q_03034</name>
</gene>
<organism>
    <name type="scientific">Saccharomyces cerevisiae (strain JAY291)</name>
    <name type="common">Baker's yeast</name>
    <dbReference type="NCBI Taxonomy" id="574961"/>
    <lineage>
        <taxon>Eukaryota</taxon>
        <taxon>Fungi</taxon>
        <taxon>Dikarya</taxon>
        <taxon>Ascomycota</taxon>
        <taxon>Saccharomycotina</taxon>
        <taxon>Saccharomycetes</taxon>
        <taxon>Saccharomycetales</taxon>
        <taxon>Saccharomycetaceae</taxon>
        <taxon>Saccharomyces</taxon>
    </lineage>
</organism>
<proteinExistence type="inferred from homology"/>
<evidence type="ECO:0000255" key="1"/>
<evidence type="ECO:0000305" key="2"/>
<dbReference type="EMBL" id="ACFL01000153">
    <property type="protein sequence ID" value="EEU06492.1"/>
    <property type="molecule type" value="Genomic_DNA"/>
</dbReference>
<dbReference type="SMR" id="C7GRS7"/>
<dbReference type="OrthoDB" id="12004at4893"/>
<dbReference type="Proteomes" id="UP000008073">
    <property type="component" value="Unassembled WGS sequence"/>
</dbReference>
<dbReference type="GO" id="GO:0016020">
    <property type="term" value="C:membrane"/>
    <property type="evidence" value="ECO:0007669"/>
    <property type="project" value="UniProtKB-SubCell"/>
</dbReference>
<dbReference type="GO" id="GO:0005739">
    <property type="term" value="C:mitochondrion"/>
    <property type="evidence" value="ECO:0007669"/>
    <property type="project" value="TreeGrafter"/>
</dbReference>
<dbReference type="InterPro" id="IPR038814">
    <property type="entry name" value="AIM11"/>
</dbReference>
<dbReference type="PANTHER" id="PTHR39136">
    <property type="entry name" value="ALTERED INHERITANCE OF MITOCHONDRIA PROTEIN 11"/>
    <property type="match status" value="1"/>
</dbReference>
<dbReference type="PANTHER" id="PTHR39136:SF1">
    <property type="entry name" value="ALTERED INHERITANCE OF MITOCHONDRIA PROTEIN 11"/>
    <property type="match status" value="1"/>
</dbReference>
<reference key="1">
    <citation type="journal article" date="2009" name="Genome Res.">
        <title>Genome structure of a Saccharomyces cerevisiae strain widely used in bioethanol production.</title>
        <authorList>
            <person name="Argueso J.L."/>
            <person name="Carazzolle M.F."/>
            <person name="Mieczkowski P.A."/>
            <person name="Duarte F.M."/>
            <person name="Netto O.V.C."/>
            <person name="Missawa S.K."/>
            <person name="Galzerani F."/>
            <person name="Costa G.G.L."/>
            <person name="Vidal R.O."/>
            <person name="Noronha M.F."/>
            <person name="Dominska M."/>
            <person name="Andrietta M.G.S."/>
            <person name="Andrietta S.R."/>
            <person name="Cunha A.F."/>
            <person name="Gomes L.H."/>
            <person name="Tavares F.C.A."/>
            <person name="Alcarde A.R."/>
            <person name="Dietrich F.S."/>
            <person name="McCusker J.H."/>
            <person name="Petes T.D."/>
            <person name="Pereira G.A.G."/>
        </authorList>
    </citation>
    <scope>NUCLEOTIDE SEQUENCE [LARGE SCALE GENOMIC DNA]</scope>
    <source>
        <strain>JAY291</strain>
    </source>
</reference>
<comment type="subcellular location">
    <subcellularLocation>
        <location evidence="2">Membrane</location>
        <topology evidence="2">Multi-pass membrane protein</topology>
    </subcellularLocation>
</comment>
<comment type="similarity">
    <text evidence="2">Belongs to the AIM11 family.</text>
</comment>
<feature type="chain" id="PRO_0000405654" description="Altered inheritance of mitochondria protein 11">
    <location>
        <begin position="1"/>
        <end position="138"/>
    </location>
</feature>
<feature type="transmembrane region" description="Helical" evidence="1">
    <location>
        <begin position="17"/>
        <end position="34"/>
    </location>
</feature>
<feature type="transmembrane region" description="Helical" evidence="1">
    <location>
        <begin position="67"/>
        <end position="89"/>
    </location>
</feature>
<protein>
    <recommendedName>
        <fullName>Altered inheritance of mitochondria protein 11</fullName>
    </recommendedName>
    <alternativeName>
        <fullName>Genetic interactor of prohibitins 8</fullName>
    </alternativeName>
</protein>
<sequence length="138" mass="15807">MIEEKKELKKRRVLQMARFYGAAAFTLITMRLISRAIKVRKCNVPSIFQQNYKLPPFSQRNEAMSALTYASAASIGTFSTLIFGFCWALDISTAREFVFKTREFMSLPQALETDTSMDEETSKLTKQLQDLLSSENNK</sequence>
<name>AIM11_YEAS2</name>